<reference key="1">
    <citation type="journal article" date="2007" name="PLoS Biol.">
        <title>Evolution of symbiotic bacteria in the distal human intestine.</title>
        <authorList>
            <person name="Xu J."/>
            <person name="Mahowald M.A."/>
            <person name="Ley R.E."/>
            <person name="Lozupone C.A."/>
            <person name="Hamady M."/>
            <person name="Martens E.C."/>
            <person name="Henrissat B."/>
            <person name="Coutinho P.M."/>
            <person name="Minx P."/>
            <person name="Latreille P."/>
            <person name="Cordum H."/>
            <person name="Van Brunt A."/>
            <person name="Kim K."/>
            <person name="Fulton R.S."/>
            <person name="Fulton L.A."/>
            <person name="Clifton S.W."/>
            <person name="Wilson R.K."/>
            <person name="Knight R.D."/>
            <person name="Gordon J.I."/>
        </authorList>
    </citation>
    <scope>NUCLEOTIDE SEQUENCE [LARGE SCALE GENOMIC DNA]</scope>
    <source>
        <strain>ATCC 8482 / DSM 1447 / JCM 5826 / CCUG 4940 / NBRC 14291 / NCTC 11154</strain>
    </source>
</reference>
<comment type="function">
    <text evidence="1">An essential GTPase which binds GTP, GDP and possibly (p)ppGpp with moderate affinity, with high nucleotide exchange rates and a fairly low GTP hydrolysis rate. Plays a role in control of the cell cycle, stress response, ribosome biogenesis and in those bacteria that undergo differentiation, in morphogenesis control.</text>
</comment>
<comment type="cofactor">
    <cofactor evidence="1">
        <name>Mg(2+)</name>
        <dbReference type="ChEBI" id="CHEBI:18420"/>
    </cofactor>
</comment>
<comment type="subunit">
    <text evidence="1">Monomer.</text>
</comment>
<comment type="subcellular location">
    <subcellularLocation>
        <location evidence="1">Cytoplasm</location>
    </subcellularLocation>
</comment>
<comment type="similarity">
    <text evidence="1">Belongs to the TRAFAC class OBG-HflX-like GTPase superfamily. OBG GTPase family.</text>
</comment>
<name>OBG_PHOV8</name>
<evidence type="ECO:0000255" key="1">
    <source>
        <dbReference type="HAMAP-Rule" id="MF_01454"/>
    </source>
</evidence>
<evidence type="ECO:0000255" key="2">
    <source>
        <dbReference type="PROSITE-ProRule" id="PRU01231"/>
    </source>
</evidence>
<evidence type="ECO:0000256" key="3">
    <source>
        <dbReference type="SAM" id="MobiDB-lite"/>
    </source>
</evidence>
<proteinExistence type="inferred from homology"/>
<dbReference type="EC" id="3.6.5.-" evidence="1"/>
<dbReference type="EMBL" id="CP000139">
    <property type="protein sequence ID" value="ABR39364.1"/>
    <property type="molecule type" value="Genomic_DNA"/>
</dbReference>
<dbReference type="SMR" id="A6L100"/>
<dbReference type="STRING" id="435590.BVU_1683"/>
<dbReference type="PaxDb" id="435590-BVU_1683"/>
<dbReference type="GeneID" id="5302649"/>
<dbReference type="KEGG" id="bvu:BVU_1683"/>
<dbReference type="eggNOG" id="COG0536">
    <property type="taxonomic scope" value="Bacteria"/>
</dbReference>
<dbReference type="HOGENOM" id="CLU_011747_2_0_10"/>
<dbReference type="BioCyc" id="BVUL435590:G1G59-1769-MONOMER"/>
<dbReference type="Proteomes" id="UP000002861">
    <property type="component" value="Chromosome"/>
</dbReference>
<dbReference type="GO" id="GO:0005737">
    <property type="term" value="C:cytoplasm"/>
    <property type="evidence" value="ECO:0007669"/>
    <property type="project" value="UniProtKB-SubCell"/>
</dbReference>
<dbReference type="GO" id="GO:0005525">
    <property type="term" value="F:GTP binding"/>
    <property type="evidence" value="ECO:0007669"/>
    <property type="project" value="UniProtKB-UniRule"/>
</dbReference>
<dbReference type="GO" id="GO:0003924">
    <property type="term" value="F:GTPase activity"/>
    <property type="evidence" value="ECO:0007669"/>
    <property type="project" value="UniProtKB-UniRule"/>
</dbReference>
<dbReference type="GO" id="GO:0000287">
    <property type="term" value="F:magnesium ion binding"/>
    <property type="evidence" value="ECO:0007669"/>
    <property type="project" value="InterPro"/>
</dbReference>
<dbReference type="GO" id="GO:0042254">
    <property type="term" value="P:ribosome biogenesis"/>
    <property type="evidence" value="ECO:0007669"/>
    <property type="project" value="UniProtKB-UniRule"/>
</dbReference>
<dbReference type="CDD" id="cd01898">
    <property type="entry name" value="Obg"/>
    <property type="match status" value="1"/>
</dbReference>
<dbReference type="FunFam" id="2.70.210.12:FF:000001">
    <property type="entry name" value="GTPase Obg"/>
    <property type="match status" value="1"/>
</dbReference>
<dbReference type="Gene3D" id="2.70.210.12">
    <property type="entry name" value="GTP1/OBG domain"/>
    <property type="match status" value="1"/>
</dbReference>
<dbReference type="Gene3D" id="3.40.50.300">
    <property type="entry name" value="P-loop containing nucleotide triphosphate hydrolases"/>
    <property type="match status" value="1"/>
</dbReference>
<dbReference type="HAMAP" id="MF_01454">
    <property type="entry name" value="GTPase_Obg"/>
    <property type="match status" value="1"/>
</dbReference>
<dbReference type="InterPro" id="IPR031167">
    <property type="entry name" value="G_OBG"/>
</dbReference>
<dbReference type="InterPro" id="IPR006073">
    <property type="entry name" value="GTP-bd"/>
</dbReference>
<dbReference type="InterPro" id="IPR014100">
    <property type="entry name" value="GTP-bd_Obg/CgtA"/>
</dbReference>
<dbReference type="InterPro" id="IPR006074">
    <property type="entry name" value="GTP1-OBG_CS"/>
</dbReference>
<dbReference type="InterPro" id="IPR006169">
    <property type="entry name" value="GTP1_OBG_dom"/>
</dbReference>
<dbReference type="InterPro" id="IPR036726">
    <property type="entry name" value="GTP1_OBG_dom_sf"/>
</dbReference>
<dbReference type="InterPro" id="IPR045086">
    <property type="entry name" value="OBG_GTPase"/>
</dbReference>
<dbReference type="InterPro" id="IPR027417">
    <property type="entry name" value="P-loop_NTPase"/>
</dbReference>
<dbReference type="NCBIfam" id="TIGR02729">
    <property type="entry name" value="Obg_CgtA"/>
    <property type="match status" value="1"/>
</dbReference>
<dbReference type="NCBIfam" id="NF008955">
    <property type="entry name" value="PRK12297.1"/>
    <property type="match status" value="1"/>
</dbReference>
<dbReference type="NCBIfam" id="NF008956">
    <property type="entry name" value="PRK12299.1"/>
    <property type="match status" value="1"/>
</dbReference>
<dbReference type="PANTHER" id="PTHR11702">
    <property type="entry name" value="DEVELOPMENTALLY REGULATED GTP-BINDING PROTEIN-RELATED"/>
    <property type="match status" value="1"/>
</dbReference>
<dbReference type="PANTHER" id="PTHR11702:SF31">
    <property type="entry name" value="MITOCHONDRIAL RIBOSOME-ASSOCIATED GTPASE 2"/>
    <property type="match status" value="1"/>
</dbReference>
<dbReference type="Pfam" id="PF01018">
    <property type="entry name" value="GTP1_OBG"/>
    <property type="match status" value="1"/>
</dbReference>
<dbReference type="Pfam" id="PF01926">
    <property type="entry name" value="MMR_HSR1"/>
    <property type="match status" value="1"/>
</dbReference>
<dbReference type="PIRSF" id="PIRSF002401">
    <property type="entry name" value="GTP_bd_Obg/CgtA"/>
    <property type="match status" value="1"/>
</dbReference>
<dbReference type="PRINTS" id="PR00326">
    <property type="entry name" value="GTP1OBG"/>
</dbReference>
<dbReference type="SUPFAM" id="SSF82051">
    <property type="entry name" value="Obg GTP-binding protein N-terminal domain"/>
    <property type="match status" value="1"/>
</dbReference>
<dbReference type="SUPFAM" id="SSF52540">
    <property type="entry name" value="P-loop containing nucleoside triphosphate hydrolases"/>
    <property type="match status" value="1"/>
</dbReference>
<dbReference type="PROSITE" id="PS51710">
    <property type="entry name" value="G_OBG"/>
    <property type="match status" value="1"/>
</dbReference>
<dbReference type="PROSITE" id="PS00905">
    <property type="entry name" value="GTP1_OBG"/>
    <property type="match status" value="1"/>
</dbReference>
<dbReference type="PROSITE" id="PS51883">
    <property type="entry name" value="OBG"/>
    <property type="match status" value="1"/>
</dbReference>
<feature type="chain" id="PRO_0000385734" description="GTPase Obg">
    <location>
        <begin position="1"/>
        <end position="394"/>
    </location>
</feature>
<feature type="domain" description="Obg" evidence="2">
    <location>
        <begin position="4"/>
        <end position="162"/>
    </location>
</feature>
<feature type="domain" description="OBG-type G" evidence="1">
    <location>
        <begin position="163"/>
        <end position="329"/>
    </location>
</feature>
<feature type="region of interest" description="Disordered" evidence="3">
    <location>
        <begin position="358"/>
        <end position="394"/>
    </location>
</feature>
<feature type="compositionally biased region" description="Acidic residues" evidence="3">
    <location>
        <begin position="361"/>
        <end position="394"/>
    </location>
</feature>
<feature type="binding site" evidence="1">
    <location>
        <begin position="169"/>
        <end position="176"/>
    </location>
    <ligand>
        <name>GTP</name>
        <dbReference type="ChEBI" id="CHEBI:37565"/>
    </ligand>
</feature>
<feature type="binding site" evidence="1">
    <location>
        <position position="176"/>
    </location>
    <ligand>
        <name>Mg(2+)</name>
        <dbReference type="ChEBI" id="CHEBI:18420"/>
    </ligand>
</feature>
<feature type="binding site" evidence="1">
    <location>
        <begin position="194"/>
        <end position="198"/>
    </location>
    <ligand>
        <name>GTP</name>
        <dbReference type="ChEBI" id="CHEBI:37565"/>
    </ligand>
</feature>
<feature type="binding site" evidence="1">
    <location>
        <position position="196"/>
    </location>
    <ligand>
        <name>Mg(2+)</name>
        <dbReference type="ChEBI" id="CHEBI:18420"/>
    </ligand>
</feature>
<feature type="binding site" evidence="1">
    <location>
        <begin position="216"/>
        <end position="219"/>
    </location>
    <ligand>
        <name>GTP</name>
        <dbReference type="ChEBI" id="CHEBI:37565"/>
    </ligand>
</feature>
<feature type="binding site" evidence="1">
    <location>
        <begin position="283"/>
        <end position="286"/>
    </location>
    <ligand>
        <name>GTP</name>
        <dbReference type="ChEBI" id="CHEBI:37565"/>
    </ligand>
</feature>
<feature type="binding site" evidence="1">
    <location>
        <begin position="310"/>
        <end position="312"/>
    </location>
    <ligand>
        <name>GTP</name>
        <dbReference type="ChEBI" id="CHEBI:37565"/>
    </ligand>
</feature>
<sequence>MAESNFVDYVKIYCRSGKGGRGSAHMRREKYVPNGGPDGGDGGRGGHVILRGNRNYWTLLHLKYDRHVFATHGGNGSKNKSFGKDGEDKVIEVPCGTVVYNAETGEYICDITEHGQEIILLKGGRGGLGNWHFRTATRQAPRFAQPGEPMQELMVILELKLLADVGLVGFPNAGKSTLLSTVSAARPKIANYPFTTLEPNLGIVSYREGKSFVMADIPGIIEGASEGKGLGLRFLRHIERNSLLLFMVPGDTDDIRKEYEILLNELATFNPEMLDKQRVLAITKSDMLDEELIAMLEPTLPDNVPHIFISSVTGLGIQQLKDILWTELNKDSNKLEGVRTETIVHRAKDVAKLQEELKDMGEDEDFEYEYEEDADDDFDYEYEDENWDEEEEKK</sequence>
<accession>A6L100</accession>
<protein>
    <recommendedName>
        <fullName evidence="1">GTPase Obg</fullName>
        <ecNumber evidence="1">3.6.5.-</ecNumber>
    </recommendedName>
    <alternativeName>
        <fullName evidence="1">GTP-binding protein Obg</fullName>
    </alternativeName>
</protein>
<gene>
    <name evidence="1" type="primary">obg</name>
    <name type="ordered locus">BVU_1683</name>
</gene>
<keyword id="KW-0963">Cytoplasm</keyword>
<keyword id="KW-0342">GTP-binding</keyword>
<keyword id="KW-0378">Hydrolase</keyword>
<keyword id="KW-0460">Magnesium</keyword>
<keyword id="KW-0479">Metal-binding</keyword>
<keyword id="KW-0547">Nucleotide-binding</keyword>
<organism>
    <name type="scientific">Phocaeicola vulgatus (strain ATCC 8482 / DSM 1447 / JCM 5826 / CCUG 4940 / NBRC 14291 / NCTC 11154)</name>
    <name type="common">Bacteroides vulgatus</name>
    <dbReference type="NCBI Taxonomy" id="435590"/>
    <lineage>
        <taxon>Bacteria</taxon>
        <taxon>Pseudomonadati</taxon>
        <taxon>Bacteroidota</taxon>
        <taxon>Bacteroidia</taxon>
        <taxon>Bacteroidales</taxon>
        <taxon>Bacteroidaceae</taxon>
        <taxon>Phocaeicola</taxon>
    </lineage>
</organism>